<evidence type="ECO:0000250" key="1"/>
<evidence type="ECO:0000250" key="2">
    <source>
        <dbReference type="UniProtKB" id="P02244"/>
    </source>
</evidence>
<evidence type="ECO:0000269" key="3">
    <source>
    </source>
</evidence>
<evidence type="ECO:0000305" key="4"/>
<organism>
    <name type="scientific">Phascolopsis gouldii</name>
    <name type="common">Peanut worm</name>
    <name type="synonym">Golfingia gouldii</name>
    <dbReference type="NCBI Taxonomy" id="6442"/>
    <lineage>
        <taxon>Eukaryota</taxon>
        <taxon>Metazoa</taxon>
        <taxon>Spiralia</taxon>
        <taxon>Lophotrochozoa</taxon>
        <taxon>Annelida</taxon>
        <taxon>Sipuncula</taxon>
        <taxon>Sipunculidea</taxon>
        <taxon>Golfingiida</taxon>
        <taxon>Sipunculidae</taxon>
        <taxon>Phascolopsis</taxon>
    </lineage>
</organism>
<accession>P27686</accession>
<protein>
    <recommendedName>
        <fullName>Myohemerythrin-1</fullName>
        <shortName>MHr-1</shortName>
    </recommendedName>
</protein>
<sequence length="119" mass="13710">PFDIPEPYVWDESFRVFYDNLDDEHKGLFKGVFNCAADMSSAGNLKHLIDVTTTHFRNEEAMMDAAKYENVVPHKQMHKDFLAKLGGLKAPLDQGTIDYAKDWLVQHIKTTDFKYKGKL</sequence>
<keyword id="KW-0903">Direct protein sequencing</keyword>
<keyword id="KW-0408">Iron</keyword>
<keyword id="KW-0479">Metal-binding</keyword>
<keyword id="KW-0514">Muscle protein</keyword>
<keyword id="KW-0561">Oxygen transport</keyword>
<keyword id="KW-0813">Transport</keyword>
<feature type="chain" id="PRO_0000191835" description="Myohemerythrin-1">
    <location>
        <begin position="1"/>
        <end position="119"/>
    </location>
</feature>
<feature type="binding site" evidence="2">
    <location>
        <position position="25"/>
    </location>
    <ligand>
        <name>Fe cation</name>
        <dbReference type="ChEBI" id="CHEBI:24875"/>
        <label>1</label>
    </ligand>
</feature>
<feature type="binding site" evidence="2">
    <location>
        <position position="55"/>
    </location>
    <ligand>
        <name>Fe cation</name>
        <dbReference type="ChEBI" id="CHEBI:24875"/>
        <label>1</label>
    </ligand>
</feature>
<feature type="binding site" evidence="1">
    <location>
        <position position="58"/>
    </location>
    <ligand>
        <name>Fe cation</name>
        <dbReference type="ChEBI" id="CHEBI:24875"/>
        <label>1</label>
    </ligand>
</feature>
<feature type="binding site" evidence="1">
    <location>
        <position position="58"/>
    </location>
    <ligand>
        <name>Fe cation</name>
        <dbReference type="ChEBI" id="CHEBI:24875"/>
        <label>2</label>
    </ligand>
</feature>
<feature type="binding site" evidence="2">
    <location>
        <position position="59"/>
    </location>
    <ligand>
        <name>Fe cation</name>
        <dbReference type="ChEBI" id="CHEBI:24875"/>
        <label>1</label>
    </ligand>
</feature>
<feature type="binding site" evidence="2">
    <location>
        <position position="59"/>
    </location>
    <ligand>
        <name>Fe cation</name>
        <dbReference type="ChEBI" id="CHEBI:24875"/>
        <label>2</label>
    </ligand>
</feature>
<feature type="binding site" evidence="2">
    <location>
        <position position="74"/>
    </location>
    <ligand>
        <name>Fe cation</name>
        <dbReference type="ChEBI" id="CHEBI:24875"/>
        <label>2</label>
    </ligand>
</feature>
<feature type="binding site" evidence="2">
    <location>
        <position position="78"/>
    </location>
    <ligand>
        <name>Fe cation</name>
        <dbReference type="ChEBI" id="CHEBI:24875"/>
        <label>2</label>
    </ligand>
</feature>
<feature type="binding site" evidence="2">
    <location>
        <position position="107"/>
    </location>
    <ligand>
        <name>Fe cation</name>
        <dbReference type="ChEBI" id="CHEBI:24875"/>
        <label>2</label>
    </ligand>
</feature>
<feature type="binding site" evidence="2">
    <location>
        <position position="112"/>
    </location>
    <ligand>
        <name>Fe cation</name>
        <dbReference type="ChEBI" id="CHEBI:24875"/>
        <label>1</label>
    </ligand>
</feature>
<feature type="binding site" evidence="2">
    <location>
        <position position="112"/>
    </location>
    <ligand>
        <name>Fe cation</name>
        <dbReference type="ChEBI" id="CHEBI:24875"/>
        <label>2</label>
    </ligand>
</feature>
<comment type="function">
    <text evidence="3">Myohemerythrin is an oxygen-binding protein found in the retractor muscles of certain worms. The oxygen-binding site contains two iron atoms.</text>
</comment>
<comment type="subunit">
    <text evidence="3">Monomer.</text>
</comment>
<comment type="tissue specificity">
    <text evidence="3">Muscle.</text>
</comment>
<comment type="similarity">
    <text evidence="4">Belongs to the hemerythrin family.</text>
</comment>
<dbReference type="PIR" id="S23922">
    <property type="entry name" value="S23922"/>
</dbReference>
<dbReference type="SMR" id="P27686"/>
<dbReference type="GO" id="GO:0005506">
    <property type="term" value="F:iron ion binding"/>
    <property type="evidence" value="ECO:0007669"/>
    <property type="project" value="InterPro"/>
</dbReference>
<dbReference type="GO" id="GO:0005344">
    <property type="term" value="F:oxygen carrier activity"/>
    <property type="evidence" value="ECO:0007669"/>
    <property type="project" value="UniProtKB-KW"/>
</dbReference>
<dbReference type="CDD" id="cd12107">
    <property type="entry name" value="Hemerythrin"/>
    <property type="match status" value="1"/>
</dbReference>
<dbReference type="Gene3D" id="1.20.120.50">
    <property type="entry name" value="Hemerythrin-like"/>
    <property type="match status" value="1"/>
</dbReference>
<dbReference type="InterPro" id="IPR002063">
    <property type="entry name" value="Haemerythrin"/>
</dbReference>
<dbReference type="InterPro" id="IPR016131">
    <property type="entry name" value="Haemerythrin_Fe_BS"/>
</dbReference>
<dbReference type="InterPro" id="IPR050669">
    <property type="entry name" value="Hemerythrin"/>
</dbReference>
<dbReference type="InterPro" id="IPR012312">
    <property type="entry name" value="Hemerythrin-like"/>
</dbReference>
<dbReference type="InterPro" id="IPR035938">
    <property type="entry name" value="Hemerythrin-like_sf"/>
</dbReference>
<dbReference type="InterPro" id="IPR012827">
    <property type="entry name" value="Hemerythrin_metal-bd"/>
</dbReference>
<dbReference type="NCBIfam" id="TIGR02481">
    <property type="entry name" value="hemeryth_dom"/>
    <property type="match status" value="1"/>
</dbReference>
<dbReference type="NCBIfam" id="TIGR00058">
    <property type="entry name" value="Hemerythrin"/>
    <property type="match status" value="1"/>
</dbReference>
<dbReference type="PANTHER" id="PTHR37164">
    <property type="entry name" value="BACTERIOHEMERYTHRIN"/>
    <property type="match status" value="1"/>
</dbReference>
<dbReference type="PANTHER" id="PTHR37164:SF1">
    <property type="entry name" value="BACTERIOHEMERYTHRIN"/>
    <property type="match status" value="1"/>
</dbReference>
<dbReference type="Pfam" id="PF01814">
    <property type="entry name" value="Hemerythrin"/>
    <property type="match status" value="1"/>
</dbReference>
<dbReference type="PIRSF" id="PIRSF002033">
    <property type="entry name" value="Hemerythrin"/>
    <property type="match status" value="1"/>
</dbReference>
<dbReference type="PRINTS" id="PR00186">
    <property type="entry name" value="HEMERYTHRIN"/>
</dbReference>
<dbReference type="SUPFAM" id="SSF47188">
    <property type="entry name" value="Hemerythrin-like"/>
    <property type="match status" value="1"/>
</dbReference>
<dbReference type="PROSITE" id="PS00550">
    <property type="entry name" value="HEMERYTHRINS"/>
    <property type="match status" value="1"/>
</dbReference>
<proteinExistence type="evidence at protein level"/>
<reference key="1">
    <citation type="journal article" date="1992" name="Biochim. Biophys. Acta">
        <title>Myohemerythrin from the sipunculid, Phascolopsis gouldii: purification, properties and amino acid sequence.</title>
        <authorList>
            <person name="Long R.C."/>
            <person name="Zhang J.-H."/>
            <person name="Kurtz D.M. Jr."/>
            <person name="Negri A."/>
            <person name="Tedeschi G."/>
            <person name="Bonomi F."/>
        </authorList>
    </citation>
    <scope>PROTEIN SEQUENCE</scope>
    <scope>FUNCTION</scope>
    <scope>SUBUNIT</scope>
    <scope>TISSUE SPECIFICITY</scope>
    <source>
        <tissue>Muscle</tissue>
    </source>
</reference>
<name>HEMT1_PHAGO</name>